<reference key="1">
    <citation type="journal article" date="2008" name="Proc. Natl. Acad. Sci. U.S.A.">
        <title>Nitrogen fixation island and rhizosphere competence traits in the genome of root-associated Pseudomonas stutzeri A1501.</title>
        <authorList>
            <person name="Yan Y."/>
            <person name="Yang J."/>
            <person name="Dou Y."/>
            <person name="Chen M."/>
            <person name="Ping S."/>
            <person name="Peng J."/>
            <person name="Lu W."/>
            <person name="Zhang W."/>
            <person name="Yao Z."/>
            <person name="Li H."/>
            <person name="Liu W."/>
            <person name="He S."/>
            <person name="Geng L."/>
            <person name="Zhang X."/>
            <person name="Yang F."/>
            <person name="Yu H."/>
            <person name="Zhan Y."/>
            <person name="Li D."/>
            <person name="Lin Z."/>
            <person name="Wang Y."/>
            <person name="Elmerich C."/>
            <person name="Lin M."/>
            <person name="Jin Q."/>
        </authorList>
    </citation>
    <scope>NUCLEOTIDE SEQUENCE [LARGE SCALE GENOMIC DNA]</scope>
    <source>
        <strain>A1501</strain>
    </source>
</reference>
<dbReference type="EC" id="7.1.2.2" evidence="1"/>
<dbReference type="EMBL" id="CP000304">
    <property type="protein sequence ID" value="ABP81815.1"/>
    <property type="molecule type" value="Genomic_DNA"/>
</dbReference>
<dbReference type="RefSeq" id="WP_011915193.1">
    <property type="nucleotide sequence ID" value="NC_009434.1"/>
</dbReference>
<dbReference type="SMR" id="A4VS64"/>
<dbReference type="KEGG" id="psa:PST_4193"/>
<dbReference type="eggNOG" id="COG0056">
    <property type="taxonomic scope" value="Bacteria"/>
</dbReference>
<dbReference type="HOGENOM" id="CLU_010091_2_1_6"/>
<dbReference type="Proteomes" id="UP000000233">
    <property type="component" value="Chromosome"/>
</dbReference>
<dbReference type="GO" id="GO:0005886">
    <property type="term" value="C:plasma membrane"/>
    <property type="evidence" value="ECO:0007669"/>
    <property type="project" value="UniProtKB-SubCell"/>
</dbReference>
<dbReference type="GO" id="GO:0045259">
    <property type="term" value="C:proton-transporting ATP synthase complex"/>
    <property type="evidence" value="ECO:0007669"/>
    <property type="project" value="UniProtKB-KW"/>
</dbReference>
<dbReference type="GO" id="GO:0043531">
    <property type="term" value="F:ADP binding"/>
    <property type="evidence" value="ECO:0007669"/>
    <property type="project" value="TreeGrafter"/>
</dbReference>
<dbReference type="GO" id="GO:0005524">
    <property type="term" value="F:ATP binding"/>
    <property type="evidence" value="ECO:0007669"/>
    <property type="project" value="UniProtKB-UniRule"/>
</dbReference>
<dbReference type="GO" id="GO:0046933">
    <property type="term" value="F:proton-transporting ATP synthase activity, rotational mechanism"/>
    <property type="evidence" value="ECO:0007669"/>
    <property type="project" value="UniProtKB-UniRule"/>
</dbReference>
<dbReference type="CDD" id="cd18113">
    <property type="entry name" value="ATP-synt_F1_alpha_C"/>
    <property type="match status" value="1"/>
</dbReference>
<dbReference type="CDD" id="cd18116">
    <property type="entry name" value="ATP-synt_F1_alpha_N"/>
    <property type="match status" value="1"/>
</dbReference>
<dbReference type="CDD" id="cd01132">
    <property type="entry name" value="F1-ATPase_alpha_CD"/>
    <property type="match status" value="1"/>
</dbReference>
<dbReference type="FunFam" id="1.20.150.20:FF:000001">
    <property type="entry name" value="ATP synthase subunit alpha"/>
    <property type="match status" value="1"/>
</dbReference>
<dbReference type="FunFam" id="2.40.30.20:FF:000001">
    <property type="entry name" value="ATP synthase subunit alpha"/>
    <property type="match status" value="1"/>
</dbReference>
<dbReference type="FunFam" id="3.40.50.300:FF:000002">
    <property type="entry name" value="ATP synthase subunit alpha"/>
    <property type="match status" value="1"/>
</dbReference>
<dbReference type="Gene3D" id="2.40.30.20">
    <property type="match status" value="1"/>
</dbReference>
<dbReference type="Gene3D" id="1.20.150.20">
    <property type="entry name" value="ATP synthase alpha/beta chain, C-terminal domain"/>
    <property type="match status" value="1"/>
</dbReference>
<dbReference type="Gene3D" id="3.40.50.300">
    <property type="entry name" value="P-loop containing nucleotide triphosphate hydrolases"/>
    <property type="match status" value="1"/>
</dbReference>
<dbReference type="HAMAP" id="MF_01346">
    <property type="entry name" value="ATP_synth_alpha_bact"/>
    <property type="match status" value="1"/>
</dbReference>
<dbReference type="InterPro" id="IPR023366">
    <property type="entry name" value="ATP_synth_asu-like_sf"/>
</dbReference>
<dbReference type="InterPro" id="IPR000793">
    <property type="entry name" value="ATP_synth_asu_C"/>
</dbReference>
<dbReference type="InterPro" id="IPR038376">
    <property type="entry name" value="ATP_synth_asu_C_sf"/>
</dbReference>
<dbReference type="InterPro" id="IPR033732">
    <property type="entry name" value="ATP_synth_F1_a_nt-bd_dom"/>
</dbReference>
<dbReference type="InterPro" id="IPR005294">
    <property type="entry name" value="ATP_synth_F1_asu"/>
</dbReference>
<dbReference type="InterPro" id="IPR020003">
    <property type="entry name" value="ATPase_a/bsu_AS"/>
</dbReference>
<dbReference type="InterPro" id="IPR004100">
    <property type="entry name" value="ATPase_F1/V1/A1_a/bsu_N"/>
</dbReference>
<dbReference type="InterPro" id="IPR036121">
    <property type="entry name" value="ATPase_F1/V1/A1_a/bsu_N_sf"/>
</dbReference>
<dbReference type="InterPro" id="IPR000194">
    <property type="entry name" value="ATPase_F1/V1/A1_a/bsu_nucl-bd"/>
</dbReference>
<dbReference type="InterPro" id="IPR027417">
    <property type="entry name" value="P-loop_NTPase"/>
</dbReference>
<dbReference type="NCBIfam" id="TIGR00962">
    <property type="entry name" value="atpA"/>
    <property type="match status" value="1"/>
</dbReference>
<dbReference type="NCBIfam" id="NF009884">
    <property type="entry name" value="PRK13343.1"/>
    <property type="match status" value="1"/>
</dbReference>
<dbReference type="PANTHER" id="PTHR48082">
    <property type="entry name" value="ATP SYNTHASE SUBUNIT ALPHA, MITOCHONDRIAL"/>
    <property type="match status" value="1"/>
</dbReference>
<dbReference type="PANTHER" id="PTHR48082:SF2">
    <property type="entry name" value="ATP SYNTHASE SUBUNIT ALPHA, MITOCHONDRIAL"/>
    <property type="match status" value="1"/>
</dbReference>
<dbReference type="Pfam" id="PF00006">
    <property type="entry name" value="ATP-synt_ab"/>
    <property type="match status" value="1"/>
</dbReference>
<dbReference type="Pfam" id="PF00306">
    <property type="entry name" value="ATP-synt_ab_C"/>
    <property type="match status" value="1"/>
</dbReference>
<dbReference type="Pfam" id="PF02874">
    <property type="entry name" value="ATP-synt_ab_N"/>
    <property type="match status" value="1"/>
</dbReference>
<dbReference type="PIRSF" id="PIRSF039088">
    <property type="entry name" value="F_ATPase_subunit_alpha"/>
    <property type="match status" value="1"/>
</dbReference>
<dbReference type="SUPFAM" id="SSF47917">
    <property type="entry name" value="C-terminal domain of alpha and beta subunits of F1 ATP synthase"/>
    <property type="match status" value="1"/>
</dbReference>
<dbReference type="SUPFAM" id="SSF50615">
    <property type="entry name" value="N-terminal domain of alpha and beta subunits of F1 ATP synthase"/>
    <property type="match status" value="1"/>
</dbReference>
<dbReference type="SUPFAM" id="SSF52540">
    <property type="entry name" value="P-loop containing nucleoside triphosphate hydrolases"/>
    <property type="match status" value="1"/>
</dbReference>
<dbReference type="PROSITE" id="PS00152">
    <property type="entry name" value="ATPASE_ALPHA_BETA"/>
    <property type="match status" value="1"/>
</dbReference>
<evidence type="ECO:0000255" key="1">
    <source>
        <dbReference type="HAMAP-Rule" id="MF_01346"/>
    </source>
</evidence>
<feature type="chain" id="PRO_0000302691" description="ATP synthase subunit alpha">
    <location>
        <begin position="1"/>
        <end position="514"/>
    </location>
</feature>
<feature type="binding site" evidence="1">
    <location>
        <begin position="170"/>
        <end position="177"/>
    </location>
    <ligand>
        <name>ATP</name>
        <dbReference type="ChEBI" id="CHEBI:30616"/>
    </ligand>
</feature>
<feature type="site" description="Required for activity" evidence="1">
    <location>
        <position position="374"/>
    </location>
</feature>
<sequence>MQQLNPSEISEIIKQRIEKSNVAAQARNEGTVVSVSDGIVRIYGLADVMYGEMIEFPGGIFGMALNLEQDSVGAVVLGNYLGLTEGMSAKCTGRILEVPVGPELLGRVVDALGNPIDGKGPINAQATDAVEKVAPGVIWRKSVDQPVQTGYKSVDAMIPVGRGQRELIIGDRQIGKTALAIDAIINQKNSGIRCVYVAIGQKQSTIANVVRKLEEHGALQNTIVVAASASESAALQYLAPYAGCTMGEYFRDRGEDALIVYDDLSKQAVAYRQISLLLRRPPGREAYPGDVFYLHSRLLERASRVSEEYVEKFTNGAVTGKTGSLTALPIIETQAGDVSAFVPTNVISITDGQIFLESAMFNAGIRPAVNAGISVSRVGGAAQTKIVKKLSGGIRTALAQYRELAAFAQFASDLDEATRKQLEHGQRVTELMKQKQYAPMSIADMSLSLYAAERGYLADVEVAKVGAFEQALIAFFNREFADLMARINVKGDFNDEIDAGLKAGIEKFKATQSW</sequence>
<name>ATPA_STUS1</name>
<proteinExistence type="inferred from homology"/>
<comment type="function">
    <text evidence="1">Produces ATP from ADP in the presence of a proton gradient across the membrane. The alpha chain is a regulatory subunit.</text>
</comment>
<comment type="catalytic activity">
    <reaction evidence="1">
        <text>ATP + H2O + 4 H(+)(in) = ADP + phosphate + 5 H(+)(out)</text>
        <dbReference type="Rhea" id="RHEA:57720"/>
        <dbReference type="ChEBI" id="CHEBI:15377"/>
        <dbReference type="ChEBI" id="CHEBI:15378"/>
        <dbReference type="ChEBI" id="CHEBI:30616"/>
        <dbReference type="ChEBI" id="CHEBI:43474"/>
        <dbReference type="ChEBI" id="CHEBI:456216"/>
        <dbReference type="EC" id="7.1.2.2"/>
    </reaction>
</comment>
<comment type="subunit">
    <text evidence="1">F-type ATPases have 2 components, CF(1) - the catalytic core - and CF(0) - the membrane proton channel. CF(1) has five subunits: alpha(3), beta(3), gamma(1), delta(1), epsilon(1). CF(0) has three main subunits: a(1), b(2) and c(9-12). The alpha and beta chains form an alternating ring which encloses part of the gamma chain. CF(1) is attached to CF(0) by a central stalk formed by the gamma and epsilon chains, while a peripheral stalk is formed by the delta and b chains.</text>
</comment>
<comment type="subcellular location">
    <subcellularLocation>
        <location evidence="1">Cell inner membrane</location>
        <topology evidence="1">Peripheral membrane protein</topology>
    </subcellularLocation>
</comment>
<comment type="similarity">
    <text evidence="1">Belongs to the ATPase alpha/beta chains family.</text>
</comment>
<keyword id="KW-0066">ATP synthesis</keyword>
<keyword id="KW-0067">ATP-binding</keyword>
<keyword id="KW-0997">Cell inner membrane</keyword>
<keyword id="KW-1003">Cell membrane</keyword>
<keyword id="KW-0139">CF(1)</keyword>
<keyword id="KW-0375">Hydrogen ion transport</keyword>
<keyword id="KW-0406">Ion transport</keyword>
<keyword id="KW-0472">Membrane</keyword>
<keyword id="KW-0547">Nucleotide-binding</keyword>
<keyword id="KW-1185">Reference proteome</keyword>
<keyword id="KW-1278">Translocase</keyword>
<keyword id="KW-0813">Transport</keyword>
<accession>A4VS64</accession>
<gene>
    <name evidence="1" type="primary">atpA</name>
    <name type="ordered locus">PST_4193</name>
</gene>
<organism>
    <name type="scientific">Stutzerimonas stutzeri (strain A1501)</name>
    <name type="common">Pseudomonas stutzeri</name>
    <dbReference type="NCBI Taxonomy" id="379731"/>
    <lineage>
        <taxon>Bacteria</taxon>
        <taxon>Pseudomonadati</taxon>
        <taxon>Pseudomonadota</taxon>
        <taxon>Gammaproteobacteria</taxon>
        <taxon>Pseudomonadales</taxon>
        <taxon>Pseudomonadaceae</taxon>
        <taxon>Stutzerimonas</taxon>
    </lineage>
</organism>
<protein>
    <recommendedName>
        <fullName evidence="1">ATP synthase subunit alpha</fullName>
        <ecNumber evidence="1">7.1.2.2</ecNumber>
    </recommendedName>
    <alternativeName>
        <fullName evidence="1">ATP synthase F1 sector subunit alpha</fullName>
    </alternativeName>
    <alternativeName>
        <fullName evidence="1">F-ATPase subunit alpha</fullName>
    </alternativeName>
</protein>